<gene>
    <name type="ordered locus">Rv2283</name>
    <name type="ORF">MTCY339.27c</name>
</gene>
<reference key="1">
    <citation type="journal article" date="1998" name="Nature">
        <title>Deciphering the biology of Mycobacterium tuberculosis from the complete genome sequence.</title>
        <authorList>
            <person name="Cole S.T."/>
            <person name="Brosch R."/>
            <person name="Parkhill J."/>
            <person name="Garnier T."/>
            <person name="Churcher C.M."/>
            <person name="Harris D.E."/>
            <person name="Gordon S.V."/>
            <person name="Eiglmeier K."/>
            <person name="Gas S."/>
            <person name="Barry C.E. III"/>
            <person name="Tekaia F."/>
            <person name="Badcock K."/>
            <person name="Basham D."/>
            <person name="Brown D."/>
            <person name="Chillingworth T."/>
            <person name="Connor R."/>
            <person name="Davies R.M."/>
            <person name="Devlin K."/>
            <person name="Feltwell T."/>
            <person name="Gentles S."/>
            <person name="Hamlin N."/>
            <person name="Holroyd S."/>
            <person name="Hornsby T."/>
            <person name="Jagels K."/>
            <person name="Krogh A."/>
            <person name="McLean J."/>
            <person name="Moule S."/>
            <person name="Murphy L.D."/>
            <person name="Oliver S."/>
            <person name="Osborne J."/>
            <person name="Quail M.A."/>
            <person name="Rajandream M.A."/>
            <person name="Rogers J."/>
            <person name="Rutter S."/>
            <person name="Seeger K."/>
            <person name="Skelton S."/>
            <person name="Squares S."/>
            <person name="Squares R."/>
            <person name="Sulston J.E."/>
            <person name="Taylor K."/>
            <person name="Whitehead S."/>
            <person name="Barrell B.G."/>
        </authorList>
    </citation>
    <scope>NUCLEOTIDE SEQUENCE [LARGE SCALE GENOMIC DNA]</scope>
    <source>
        <strain>ATCC 25618 / H37Rv</strain>
    </source>
</reference>
<feature type="chain" id="PRO_0000104004" description="Uncharacterized protein Rv2283">
    <location>
        <begin position="1"/>
        <end position="64"/>
    </location>
</feature>
<feature type="region of interest" description="Disordered" evidence="1">
    <location>
        <begin position="35"/>
        <end position="64"/>
    </location>
</feature>
<proteinExistence type="predicted"/>
<protein>
    <recommendedName>
        <fullName>Uncharacterized protein Rv2283</fullName>
    </recommendedName>
</protein>
<name>Y2283_MYCTU</name>
<organism>
    <name type="scientific">Mycobacterium tuberculosis (strain ATCC 25618 / H37Rv)</name>
    <dbReference type="NCBI Taxonomy" id="83332"/>
    <lineage>
        <taxon>Bacteria</taxon>
        <taxon>Bacillati</taxon>
        <taxon>Actinomycetota</taxon>
        <taxon>Actinomycetes</taxon>
        <taxon>Mycobacteriales</taxon>
        <taxon>Mycobacteriaceae</taxon>
        <taxon>Mycobacterium</taxon>
        <taxon>Mycobacterium tuberculosis complex</taxon>
    </lineage>
</organism>
<sequence>MLEKCPHASVDCGASKIGITDNDPATATNRRLASTIRKPPIEHAAGPLGSTSRAGHRSYGGVAS</sequence>
<evidence type="ECO:0000256" key="1">
    <source>
        <dbReference type="SAM" id="MobiDB-lite"/>
    </source>
</evidence>
<accession>P9WLE9</accession>
<accession>L0T9D1</accession>
<accession>P64973</accession>
<accession>Q50682</accession>
<dbReference type="EMBL" id="AL123456">
    <property type="protein sequence ID" value="CCP45065.1"/>
    <property type="molecule type" value="Genomic_DNA"/>
</dbReference>
<dbReference type="PIR" id="G70731">
    <property type="entry name" value="G70731"/>
</dbReference>
<dbReference type="RefSeq" id="NP_216799.1">
    <property type="nucleotide sequence ID" value="NC_000962.3"/>
</dbReference>
<dbReference type="RefSeq" id="WP_003902159.1">
    <property type="nucleotide sequence ID" value="NZ_NVQJ01000012.1"/>
</dbReference>
<dbReference type="STRING" id="83332.Rv2283"/>
<dbReference type="PaxDb" id="83332-Rv2283"/>
<dbReference type="DNASU" id="887644"/>
<dbReference type="GeneID" id="887644"/>
<dbReference type="KEGG" id="mtu:Rv2283"/>
<dbReference type="KEGG" id="mtv:RVBD_2283"/>
<dbReference type="TubercuList" id="Rv2283"/>
<dbReference type="InParanoid" id="P9WLE9"/>
<dbReference type="Proteomes" id="UP000001584">
    <property type="component" value="Chromosome"/>
</dbReference>
<keyword id="KW-1185">Reference proteome</keyword>